<evidence type="ECO:0000250" key="1"/>
<evidence type="ECO:0000255" key="2">
    <source>
        <dbReference type="PROSITE-ProRule" id="PRU00366"/>
    </source>
</evidence>
<evidence type="ECO:0000256" key="3">
    <source>
        <dbReference type="SAM" id="MobiDB-lite"/>
    </source>
</evidence>
<evidence type="ECO:0000305" key="4"/>
<proteinExistence type="evidence at protein level"/>
<feature type="chain" id="PRO_0000290417" description="Ethylene-responsive transcription factor ERF104">
    <location>
        <begin position="1"/>
        <end position="241"/>
    </location>
</feature>
<feature type="DNA-binding region" description="AP2/ERF" evidence="2">
    <location>
        <begin position="87"/>
        <end position="145"/>
    </location>
</feature>
<feature type="region of interest" description="Disordered" evidence="3">
    <location>
        <begin position="37"/>
        <end position="87"/>
    </location>
</feature>
<feature type="region of interest" description="Disordered" evidence="3">
    <location>
        <begin position="162"/>
        <end position="203"/>
    </location>
</feature>
<feature type="compositionally biased region" description="Polar residues" evidence="3">
    <location>
        <begin position="44"/>
        <end position="61"/>
    </location>
</feature>
<feature type="compositionally biased region" description="Basic and acidic residues" evidence="3">
    <location>
        <begin position="78"/>
        <end position="87"/>
    </location>
</feature>
<feature type="compositionally biased region" description="Basic and acidic residues" evidence="3">
    <location>
        <begin position="170"/>
        <end position="184"/>
    </location>
</feature>
<feature type="compositionally biased region" description="Acidic residues" evidence="3">
    <location>
        <begin position="185"/>
        <end position="199"/>
    </location>
</feature>
<feature type="sequence conflict" description="In Ref. 4; AAM67014." evidence="4" ref="4">
    <original>G</original>
    <variation>S</variation>
    <location>
        <position position="171"/>
    </location>
</feature>
<feature type="sequence conflict" description="In Ref. 3; AAK25859." evidence="4" ref="3">
    <original>P</original>
    <variation>S</variation>
    <location>
        <position position="207"/>
    </location>
</feature>
<sequence>MATKQEALAIDFISQHLLTDFVSMETDHPSLFTNQLHNFHSETGPRTITNQSPKPNSTLNQRKPPLPNLSVSRTVSTKTEKEEEERHYRGVRRRPWGKYAAEIRDPNKKGCRIWLGTYDTAVEAGRAYDQAAFQLRGRKAILNFPLDVRVTSETCSGEGVIGLGKRKRDKGSPPEEEKAARVKVEEEESNTSETTEAEVEPVVPLTPSSWMGFWDVGAGDGIFSIPPLSPTSPNFSVISVT</sequence>
<comment type="function">
    <text evidence="1">Probably acts as a transcriptional activator. Binds to the GCC-box pathogenesis-related promoter element. May be involved in the regulation of gene expression by stress factors and by components of stress signal transduction pathways (By similarity).</text>
</comment>
<comment type="interaction">
    <interactant intactId="EBI-2360943">
        <id>Q9FKG1</id>
    </interactant>
    <interactant intactId="EBI-349548">
        <id>Q39026</id>
        <label>MPK6</label>
    </interactant>
    <organismsDiffer>false</organismsDiffer>
    <experiments>3</experiments>
</comment>
<comment type="subcellular location">
    <subcellularLocation>
        <location evidence="4">Nucleus</location>
    </subcellularLocation>
</comment>
<comment type="similarity">
    <text evidence="4">Belongs to the AP2/ERF transcription factor family. ERF subfamily.</text>
</comment>
<reference key="1">
    <citation type="journal article" date="1998" name="DNA Res.">
        <title>Structural analysis of Arabidopsis thaliana chromosome 5. VI. Sequence features of the regions of 1,367,185 bp covered by 19 physically assigned P1 and TAC clones.</title>
        <authorList>
            <person name="Kotani H."/>
            <person name="Nakamura Y."/>
            <person name="Sato S."/>
            <person name="Asamizu E."/>
            <person name="Kaneko T."/>
            <person name="Miyajima N."/>
            <person name="Tabata S."/>
        </authorList>
    </citation>
    <scope>NUCLEOTIDE SEQUENCE [LARGE SCALE GENOMIC DNA]</scope>
    <source>
        <strain>cv. Columbia</strain>
    </source>
</reference>
<reference key="2">
    <citation type="journal article" date="2017" name="Plant J.">
        <title>Araport11: a complete reannotation of the Arabidopsis thaliana reference genome.</title>
        <authorList>
            <person name="Cheng C.Y."/>
            <person name="Krishnakumar V."/>
            <person name="Chan A.P."/>
            <person name="Thibaud-Nissen F."/>
            <person name="Schobel S."/>
            <person name="Town C.D."/>
        </authorList>
    </citation>
    <scope>GENOME REANNOTATION</scope>
    <source>
        <strain>cv. Columbia</strain>
    </source>
</reference>
<reference key="3">
    <citation type="journal article" date="2003" name="Science">
        <title>Empirical analysis of transcriptional activity in the Arabidopsis genome.</title>
        <authorList>
            <person name="Yamada K."/>
            <person name="Lim J."/>
            <person name="Dale J.M."/>
            <person name="Chen H."/>
            <person name="Shinn P."/>
            <person name="Palm C.J."/>
            <person name="Southwick A.M."/>
            <person name="Wu H.C."/>
            <person name="Kim C.J."/>
            <person name="Nguyen M."/>
            <person name="Pham P.K."/>
            <person name="Cheuk R.F."/>
            <person name="Karlin-Newmann G."/>
            <person name="Liu S.X."/>
            <person name="Lam B."/>
            <person name="Sakano H."/>
            <person name="Wu T."/>
            <person name="Yu G."/>
            <person name="Miranda M."/>
            <person name="Quach H.L."/>
            <person name="Tripp M."/>
            <person name="Chang C.H."/>
            <person name="Lee J.M."/>
            <person name="Toriumi M.J."/>
            <person name="Chan M.M."/>
            <person name="Tang C.C."/>
            <person name="Onodera C.S."/>
            <person name="Deng J.M."/>
            <person name="Akiyama K."/>
            <person name="Ansari Y."/>
            <person name="Arakawa T."/>
            <person name="Banh J."/>
            <person name="Banno F."/>
            <person name="Bowser L."/>
            <person name="Brooks S.Y."/>
            <person name="Carninci P."/>
            <person name="Chao Q."/>
            <person name="Choy N."/>
            <person name="Enju A."/>
            <person name="Goldsmith A.D."/>
            <person name="Gurjal M."/>
            <person name="Hansen N.F."/>
            <person name="Hayashizaki Y."/>
            <person name="Johnson-Hopson C."/>
            <person name="Hsuan V.W."/>
            <person name="Iida K."/>
            <person name="Karnes M."/>
            <person name="Khan S."/>
            <person name="Koesema E."/>
            <person name="Ishida J."/>
            <person name="Jiang P.X."/>
            <person name="Jones T."/>
            <person name="Kawai J."/>
            <person name="Kamiya A."/>
            <person name="Meyers C."/>
            <person name="Nakajima M."/>
            <person name="Narusaka M."/>
            <person name="Seki M."/>
            <person name="Sakurai T."/>
            <person name="Satou M."/>
            <person name="Tamse R."/>
            <person name="Vaysberg M."/>
            <person name="Wallender E.K."/>
            <person name="Wong C."/>
            <person name="Yamamura Y."/>
            <person name="Yuan S."/>
            <person name="Shinozaki K."/>
            <person name="Davis R.W."/>
            <person name="Theologis A."/>
            <person name="Ecker J.R."/>
        </authorList>
    </citation>
    <scope>NUCLEOTIDE SEQUENCE [LARGE SCALE MRNA]</scope>
    <source>
        <strain>cv. Columbia</strain>
    </source>
</reference>
<reference key="4">
    <citation type="submission" date="2002-03" db="EMBL/GenBank/DDBJ databases">
        <title>Full-length cDNA from Arabidopsis thaliana.</title>
        <authorList>
            <person name="Brover V.V."/>
            <person name="Troukhan M.E."/>
            <person name="Alexandrov N.A."/>
            <person name="Lu Y.-P."/>
            <person name="Flavell R.B."/>
            <person name="Feldmann K.A."/>
        </authorList>
    </citation>
    <scope>NUCLEOTIDE SEQUENCE [LARGE SCALE MRNA]</scope>
</reference>
<reference key="5">
    <citation type="journal article" date="2006" name="Plant Physiol.">
        <title>Genome-wide analysis of the ERF gene family in Arabidopsis and rice.</title>
        <authorList>
            <person name="Nakano T."/>
            <person name="Suzuki K."/>
            <person name="Fujimura T."/>
            <person name="Shinshi H."/>
        </authorList>
    </citation>
    <scope>GENE FAMILY</scope>
    <scope>NOMENCLATURE</scope>
</reference>
<accession>Q9FKG1</accession>
<accession>Q8L909</accession>
<accession>Q9C5M2</accession>
<dbReference type="EMBL" id="AB012239">
    <property type="protein sequence ID" value="BAB09004.1"/>
    <property type="molecule type" value="Genomic_DNA"/>
</dbReference>
<dbReference type="EMBL" id="CP002688">
    <property type="protein sequence ID" value="AED97495.1"/>
    <property type="molecule type" value="Genomic_DNA"/>
</dbReference>
<dbReference type="EMBL" id="AF360149">
    <property type="protein sequence ID" value="AAK25859.1"/>
    <property type="molecule type" value="mRNA"/>
</dbReference>
<dbReference type="EMBL" id="AY054228">
    <property type="protein sequence ID" value="AAL06888.1"/>
    <property type="molecule type" value="mRNA"/>
</dbReference>
<dbReference type="EMBL" id="AY142636">
    <property type="protein sequence ID" value="AAN13094.1"/>
    <property type="molecule type" value="mRNA"/>
</dbReference>
<dbReference type="EMBL" id="AY088694">
    <property type="protein sequence ID" value="AAM67014.1"/>
    <property type="molecule type" value="mRNA"/>
</dbReference>
<dbReference type="RefSeq" id="NP_200968.1">
    <property type="nucleotide sequence ID" value="NM_125553.3"/>
</dbReference>
<dbReference type="SMR" id="Q9FKG1"/>
<dbReference type="BioGRID" id="21525">
    <property type="interactions" value="6"/>
</dbReference>
<dbReference type="DIP" id="DIP-48849N"/>
<dbReference type="FunCoup" id="Q9FKG1">
    <property type="interactions" value="8"/>
</dbReference>
<dbReference type="IntAct" id="Q9FKG1">
    <property type="interactions" value="4"/>
</dbReference>
<dbReference type="STRING" id="3702.Q9FKG1"/>
<dbReference type="PaxDb" id="3702-AT5G61600.1"/>
<dbReference type="ProteomicsDB" id="224729"/>
<dbReference type="EnsemblPlants" id="AT5G61600.1">
    <property type="protein sequence ID" value="AT5G61600.1"/>
    <property type="gene ID" value="AT5G61600"/>
</dbReference>
<dbReference type="GeneID" id="836281"/>
<dbReference type="Gramene" id="AT5G61600.1">
    <property type="protein sequence ID" value="AT5G61600.1"/>
    <property type="gene ID" value="AT5G61600"/>
</dbReference>
<dbReference type="KEGG" id="ath:AT5G61600"/>
<dbReference type="Araport" id="AT5G61600"/>
<dbReference type="TAIR" id="AT5G61600">
    <property type="gene designation" value="ERF104"/>
</dbReference>
<dbReference type="eggNOG" id="ENOG502RXE3">
    <property type="taxonomic scope" value="Eukaryota"/>
</dbReference>
<dbReference type="HOGENOM" id="CLU_058713_0_0_1"/>
<dbReference type="InParanoid" id="Q9FKG1"/>
<dbReference type="OMA" id="VFMENYC"/>
<dbReference type="PhylomeDB" id="Q9FKG1"/>
<dbReference type="PRO" id="PR:Q9FKG1"/>
<dbReference type="Proteomes" id="UP000006548">
    <property type="component" value="Chromosome 5"/>
</dbReference>
<dbReference type="ExpressionAtlas" id="Q9FKG1">
    <property type="expression patterns" value="baseline and differential"/>
</dbReference>
<dbReference type="GO" id="GO:0005634">
    <property type="term" value="C:nucleus"/>
    <property type="evidence" value="ECO:0007669"/>
    <property type="project" value="UniProtKB-SubCell"/>
</dbReference>
<dbReference type="GO" id="GO:0003700">
    <property type="term" value="F:DNA-binding transcription factor activity"/>
    <property type="evidence" value="ECO:0000250"/>
    <property type="project" value="TAIR"/>
</dbReference>
<dbReference type="GO" id="GO:0000976">
    <property type="term" value="F:transcription cis-regulatory region binding"/>
    <property type="evidence" value="ECO:0000353"/>
    <property type="project" value="TAIR"/>
</dbReference>
<dbReference type="GO" id="GO:0051301">
    <property type="term" value="P:cell division"/>
    <property type="evidence" value="ECO:0000270"/>
    <property type="project" value="TAIR"/>
</dbReference>
<dbReference type="GO" id="GO:0050832">
    <property type="term" value="P:defense response to fungus"/>
    <property type="evidence" value="ECO:0000315"/>
    <property type="project" value="TAIR"/>
</dbReference>
<dbReference type="GO" id="GO:0009873">
    <property type="term" value="P:ethylene-activated signaling pathway"/>
    <property type="evidence" value="ECO:0007669"/>
    <property type="project" value="UniProtKB-KW"/>
</dbReference>
<dbReference type="GO" id="GO:0010087">
    <property type="term" value="P:phloem or xylem histogenesis"/>
    <property type="evidence" value="ECO:0000270"/>
    <property type="project" value="TAIR"/>
</dbReference>
<dbReference type="GO" id="GO:0045893">
    <property type="term" value="P:positive regulation of DNA-templated transcription"/>
    <property type="evidence" value="ECO:0000314"/>
    <property type="project" value="TAIR"/>
</dbReference>
<dbReference type="CDD" id="cd00018">
    <property type="entry name" value="AP2"/>
    <property type="match status" value="1"/>
</dbReference>
<dbReference type="FunFam" id="3.30.730.10:FF:000001">
    <property type="entry name" value="Ethylene-responsive transcription factor 2"/>
    <property type="match status" value="1"/>
</dbReference>
<dbReference type="Gene3D" id="3.30.730.10">
    <property type="entry name" value="AP2/ERF domain"/>
    <property type="match status" value="1"/>
</dbReference>
<dbReference type="InterPro" id="IPR001471">
    <property type="entry name" value="AP2/ERF_dom"/>
</dbReference>
<dbReference type="InterPro" id="IPR036955">
    <property type="entry name" value="AP2/ERF_dom_sf"/>
</dbReference>
<dbReference type="InterPro" id="IPR016177">
    <property type="entry name" value="DNA-bd_dom_sf"/>
</dbReference>
<dbReference type="InterPro" id="IPR044808">
    <property type="entry name" value="ERF_plant"/>
</dbReference>
<dbReference type="PANTHER" id="PTHR31190">
    <property type="entry name" value="DNA-BINDING DOMAIN"/>
    <property type="match status" value="1"/>
</dbReference>
<dbReference type="PANTHER" id="PTHR31190:SF499">
    <property type="entry name" value="ETHYLENE-RESPONSIVE TRANSCRIPTION FACTOR ERF105"/>
    <property type="match status" value="1"/>
</dbReference>
<dbReference type="Pfam" id="PF00847">
    <property type="entry name" value="AP2"/>
    <property type="match status" value="1"/>
</dbReference>
<dbReference type="PRINTS" id="PR00367">
    <property type="entry name" value="ETHRSPELEMNT"/>
</dbReference>
<dbReference type="SMART" id="SM00380">
    <property type="entry name" value="AP2"/>
    <property type="match status" value="1"/>
</dbReference>
<dbReference type="SUPFAM" id="SSF54171">
    <property type="entry name" value="DNA-binding domain"/>
    <property type="match status" value="1"/>
</dbReference>
<dbReference type="PROSITE" id="PS51032">
    <property type="entry name" value="AP2_ERF"/>
    <property type="match status" value="1"/>
</dbReference>
<gene>
    <name type="primary">ERF104</name>
    <name type="ordered locus">At5g61600</name>
    <name type="ORF">K11J9.13</name>
</gene>
<protein>
    <recommendedName>
        <fullName>Ethylene-responsive transcription factor ERF104</fullName>
    </recommendedName>
</protein>
<organism>
    <name type="scientific">Arabidopsis thaliana</name>
    <name type="common">Mouse-ear cress</name>
    <dbReference type="NCBI Taxonomy" id="3702"/>
    <lineage>
        <taxon>Eukaryota</taxon>
        <taxon>Viridiplantae</taxon>
        <taxon>Streptophyta</taxon>
        <taxon>Embryophyta</taxon>
        <taxon>Tracheophyta</taxon>
        <taxon>Spermatophyta</taxon>
        <taxon>Magnoliopsida</taxon>
        <taxon>eudicotyledons</taxon>
        <taxon>Gunneridae</taxon>
        <taxon>Pentapetalae</taxon>
        <taxon>rosids</taxon>
        <taxon>malvids</taxon>
        <taxon>Brassicales</taxon>
        <taxon>Brassicaceae</taxon>
        <taxon>Camelineae</taxon>
        <taxon>Arabidopsis</taxon>
    </lineage>
</organism>
<keyword id="KW-0010">Activator</keyword>
<keyword id="KW-0238">DNA-binding</keyword>
<keyword id="KW-0936">Ethylene signaling pathway</keyword>
<keyword id="KW-0539">Nucleus</keyword>
<keyword id="KW-1185">Reference proteome</keyword>
<keyword id="KW-0804">Transcription</keyword>
<keyword id="KW-0805">Transcription regulation</keyword>
<name>EF104_ARATH</name>